<keyword id="KW-1043">Host membrane</keyword>
<keyword id="KW-1048">Host nucleus</keyword>
<keyword id="KW-0472">Membrane</keyword>
<keyword id="KW-0479">Metal-binding</keyword>
<keyword id="KW-0597">Phosphoprotein</keyword>
<keyword id="KW-1185">Reference proteome</keyword>
<keyword id="KW-0862">Zinc</keyword>
<keyword id="KW-0863">Zinc-finger</keyword>
<sequence>MFDGRSDIYDSTSFAAELDDLYSCRSTGRENGRRSRVSTRGVHRDRCGSAAKRRSTKRRCELVARERDRYSLYLDYMASHPSDEISAVRELVVPLIKTTSITLPFDLNQTVADNCLSLSGMGYYLGIGGCCPTCTVSGEPRLHRADRAALILAYVQQLNNIYEYRGFLASVLAAAAQGDQAGVAASEGVQAERLLENVLAQPELFFAYHVLRDGGIQNVRVLFYRDLSVSGYMMYAVFPTKSVHLHYRLIDRLLAACPGYKIIAHVWQTAFVLVVRRDEGQQTDMDIPTVSAGDIYCKMCDLSFDGELLLEYKKLYAVFDDFLPPV</sequence>
<feature type="chain" id="PRO_0000116007" description="Nuclear egress protein 1">
    <location>
        <begin position="1"/>
        <end position="326"/>
    </location>
</feature>
<feature type="zinc finger region" description="CCCH-type" evidence="1">
    <location>
        <begin position="115"/>
        <end position="244"/>
    </location>
</feature>
<reference key="1">
    <citation type="journal article" date="1992" name="Virology">
        <title>The DNA sequence of equine herpesvirus-1.</title>
        <authorList>
            <person name="Telford E.A.R."/>
            <person name="Watson M.S."/>
            <person name="McBride K."/>
            <person name="Davison A.J."/>
        </authorList>
    </citation>
    <scope>NUCLEOTIDE SEQUENCE [LARGE SCALE GENOMIC DNA]</scope>
</reference>
<name>NEC1_EHV1B</name>
<accession>P28951</accession>
<accession>Q6DLI2</accession>
<gene>
    <name evidence="1" type="primary">NEC1</name>
    <name type="ordered locus">29</name>
</gene>
<protein>
    <recommendedName>
        <fullName evidence="1">Nuclear egress protein 1</fullName>
    </recommendedName>
</protein>
<comment type="function">
    <text evidence="1">Plays an essential role in virion nuclear egress, the first step of virion release from infected cell. Within the host nucleus, NEC1 interacts with the newly formed capsid through the vertexes and directs it to the inner nuclear membrane by associating with NEC2. Induces the budding of the capsid at the inner nuclear membrane as well as its envelopment into the perinuclear space. There, the NEC1/NEC2 complex promotes the fusion of the enveloped capsid with the outer nuclear membrane and the subsequent release of the viral capsid into the cytoplasm where it will reach the secondary budding sites in the host Golgi or trans-Golgi network.</text>
</comment>
<comment type="subunit">
    <text evidence="1">Forms a heterohexameric complex with NEC2. Interacts with capsid vertex specific component 2/CVC2; this interaction directs the capsid to the host inner nuclear membrane to initiate budding.</text>
</comment>
<comment type="subcellular location">
    <subcellularLocation>
        <location evidence="1">Host nucleus inner membrane</location>
    </subcellularLocation>
    <text evidence="1">Remains attached to the nucleus inner membrane through interaction with NEC2.</text>
</comment>
<comment type="PTM">
    <text evidence="1">Phosphorylated at serine residues in the N-terminus. This phosphorylation regulates the localization within the inner nuclear membrane.</text>
</comment>
<comment type="similarity">
    <text evidence="1">Belongs to the herpesviridae NEC1 protein family.</text>
</comment>
<organism>
    <name type="scientific">Equine herpesvirus 1 (strain Ab4p)</name>
    <name type="common">EHV-1</name>
    <name type="synonym">Equine abortion virus</name>
    <dbReference type="NCBI Taxonomy" id="31520"/>
    <lineage>
        <taxon>Viruses</taxon>
        <taxon>Duplodnaviria</taxon>
        <taxon>Heunggongvirae</taxon>
        <taxon>Peploviricota</taxon>
        <taxon>Herviviricetes</taxon>
        <taxon>Herpesvirales</taxon>
        <taxon>Orthoherpesviridae</taxon>
        <taxon>Alphaherpesvirinae</taxon>
        <taxon>Varicellovirus</taxon>
        <taxon>Varicellovirus equidalpha1</taxon>
        <taxon>Equid alphaherpesvirus 1</taxon>
    </lineage>
</organism>
<dbReference type="EMBL" id="AY665713">
    <property type="protein sequence ID" value="AAT67286.1"/>
    <property type="molecule type" value="Genomic_DNA"/>
</dbReference>
<dbReference type="PIR" id="C36798">
    <property type="entry name" value="WZBEC2"/>
</dbReference>
<dbReference type="SMR" id="P28951"/>
<dbReference type="KEGG" id="vg:1487569"/>
<dbReference type="Proteomes" id="UP000001189">
    <property type="component" value="Segment"/>
</dbReference>
<dbReference type="GO" id="GO:0044201">
    <property type="term" value="C:host cell nuclear inner membrane"/>
    <property type="evidence" value="ECO:0007669"/>
    <property type="project" value="UniProtKB-SubCell"/>
</dbReference>
<dbReference type="GO" id="GO:0016020">
    <property type="term" value="C:membrane"/>
    <property type="evidence" value="ECO:0007669"/>
    <property type="project" value="UniProtKB-KW"/>
</dbReference>
<dbReference type="GO" id="GO:0008270">
    <property type="term" value="F:zinc ion binding"/>
    <property type="evidence" value="ECO:0007669"/>
    <property type="project" value="UniProtKB-KW"/>
</dbReference>
<dbReference type="GO" id="GO:0046765">
    <property type="term" value="P:viral budding from nuclear membrane"/>
    <property type="evidence" value="ECO:0007669"/>
    <property type="project" value="InterPro"/>
</dbReference>
<dbReference type="HAMAP" id="MF_04023">
    <property type="entry name" value="HSV_NEC1"/>
    <property type="match status" value="1"/>
</dbReference>
<dbReference type="InterPro" id="IPR021152">
    <property type="entry name" value="Herpes_UL31"/>
</dbReference>
<dbReference type="Pfam" id="PF02718">
    <property type="entry name" value="Herpes_UL31"/>
    <property type="match status" value="1"/>
</dbReference>
<proteinExistence type="inferred from homology"/>
<evidence type="ECO:0000255" key="1">
    <source>
        <dbReference type="HAMAP-Rule" id="MF_04023"/>
    </source>
</evidence>
<organismHost>
    <name type="scientific">Equus caballus</name>
    <name type="common">Horse</name>
    <dbReference type="NCBI Taxonomy" id="9796"/>
</organismHost>